<comment type="function">
    <text evidence="2">ATPase component of the type II secretion system required for the energy-dependent secretion of extracellular factors such as proteases and toxins from the periplasm. Acts as a molecular motor to provide the energy that is required for assembly of the pseudopilus and the extrusion of substrates generated in the cytoplasm.</text>
</comment>
<comment type="catalytic activity">
    <reaction evidence="1">
        <text>ATP + H2O + cellular proteinSide 1 = ADP + phosphate + cellular proteinSide 2.</text>
        <dbReference type="EC" id="7.4.2.8"/>
    </reaction>
</comment>
<comment type="cofactor">
    <cofactor evidence="1">
        <name>Zn(2+)</name>
        <dbReference type="ChEBI" id="CHEBI:29105"/>
    </cofactor>
</comment>
<comment type="subunit">
    <text evidence="1 2">Forms homooligomers; most probably hexamers (By similarity). Interacts with OutL/GspL (By similarity).</text>
</comment>
<comment type="subcellular location">
    <subcellularLocation>
        <location evidence="2">Cell inner membrane</location>
    </subcellularLocation>
    <text evidence="2">Membrane association is not an intrinsic property but requires the OutL/GspL gene product.</text>
</comment>
<comment type="similarity">
    <text evidence="3">Belongs to the GSP E family.</text>
</comment>
<accession>Q01566</accession>
<accession>E0SM40</accession>
<sequence>MSDQPVNTPELRPVLPFSFARAQQILLLQDESVTVAEVVCVPDTPALALLEARRVAGVPLAVSQVSPEEFERQLVMRYQRDSEEARRLMEDIGNDIDFYTLAEELPDSDDLLDGEDDAPIIRLINAMLTEAIKHKASDIHIETFERHLLIRFRIDGVLREILRPQRQLASLLVSRIKVMAKLDIAEKRVPQDGRMALRIGGRAIDVRVSTLPSNYGERVVLRLLDKNSVRLDLEALGMAEHNRRQLDTLIHRPHGIILVTGPTGSGKSTTLYAALSRLNSAERNIMTVEDPIEYELEGIGQTQVNPKVDMTFARGLRAILRQDPDVVLVGEIRDGETAQIAVQASLTGHLVLSTLHTNSALGALSRLQDMGIEPFLLSTSLLGVLAQRLVRTLCPSCRQPYVINDEQAQQTGLAAGTTLYHPGGCEKCNYSGYRGRTGIHELLLIDDTVRTAIHHGESELGIARMLGDKRITIRQDGLDKVLAGVTTWEEVVRVTKEE</sequence>
<gene>
    <name type="primary">outE</name>
    <name type="ordered locus">Dda3937_02416</name>
</gene>
<protein>
    <recommendedName>
        <fullName>Type II secretion system protein E</fullName>
        <shortName>T2SS protein E</shortName>
        <ecNumber evidence="1">7.4.2.8</ecNumber>
    </recommendedName>
    <alternativeName>
        <fullName>General secretion pathway protein E</fullName>
    </alternativeName>
    <alternativeName>
        <fullName>Pectic enzymes secretion protein OutE</fullName>
    </alternativeName>
    <alternativeName>
        <fullName>Type II traffic warden ATPase</fullName>
    </alternativeName>
</protein>
<reference key="1">
    <citation type="journal article" date="2011" name="J. Bacteriol.">
        <title>Genome sequence of the plant-pathogenic bacterium Dickeya dadantii 3937.</title>
        <authorList>
            <person name="Glasner J.D."/>
            <person name="Yang C.H."/>
            <person name="Reverchon S."/>
            <person name="Hugouvieux-Cotte-Pattat N."/>
            <person name="Condemine G."/>
            <person name="Bohin J.P."/>
            <person name="Van Gijsegem F."/>
            <person name="Yang S."/>
            <person name="Franza T."/>
            <person name="Expert D."/>
            <person name="Plunkett G. III"/>
            <person name="San Francisco M.J."/>
            <person name="Charkowski A.O."/>
            <person name="Py B."/>
            <person name="Bell K."/>
            <person name="Rauscher L."/>
            <person name="Rodriguez-Palenzuela P."/>
            <person name="Toussaint A."/>
            <person name="Holeva M.C."/>
            <person name="He S.Y."/>
            <person name="Douet V."/>
            <person name="Boccara M."/>
            <person name="Blanco C."/>
            <person name="Toth I."/>
            <person name="Anderson B.D."/>
            <person name="Biehl B.S."/>
            <person name="Mau B."/>
            <person name="Flynn S.M."/>
            <person name="Barras F."/>
            <person name="Lindeberg M."/>
            <person name="Birch P.R."/>
            <person name="Tsuyumu S."/>
            <person name="Shi X."/>
            <person name="Hibbing M."/>
            <person name="Yap M.N."/>
            <person name="Carpentier M."/>
            <person name="Dassa E."/>
            <person name="Umehara M."/>
            <person name="Kim J.F."/>
            <person name="Rusch M."/>
            <person name="Soni P."/>
            <person name="Mayhew G.F."/>
            <person name="Fouts D.E."/>
            <person name="Gill S.R."/>
            <person name="Blattner F.R."/>
            <person name="Keen N.T."/>
            <person name="Perna N.T."/>
        </authorList>
    </citation>
    <scope>NUCLEOTIDE SEQUENCE [LARGE SCALE GENOMIC DNA]</scope>
    <source>
        <strain>3937</strain>
    </source>
</reference>
<reference key="2">
    <citation type="journal article" date="1992" name="Mol. Microbiol.">
        <title>Some of the out genes involved in the secretion of pectate lyases in Erwinia chrysanthemi are regulated by kdgR.</title>
        <authorList>
            <person name="Condemine G."/>
            <person name="Dorel C."/>
            <person name="Hugouvieux-Cotte-Pattat N."/>
            <person name="Robert-Baudouy J."/>
        </authorList>
    </citation>
    <scope>NUCLEOTIDE SEQUENCE [GENOMIC DNA] OF 1-97</scope>
    <source>
        <strain>3937</strain>
    </source>
</reference>
<feature type="chain" id="PRO_0000207286" description="Type II secretion system protein E">
    <location>
        <begin position="1"/>
        <end position="498"/>
    </location>
</feature>
<feature type="binding site" evidence="1">
    <location>
        <position position="394"/>
    </location>
    <ligand>
        <name>Zn(2+)</name>
        <dbReference type="ChEBI" id="CHEBI:29105"/>
    </ligand>
</feature>
<feature type="binding site" evidence="1">
    <location>
        <position position="397"/>
    </location>
    <ligand>
        <name>Zn(2+)</name>
        <dbReference type="ChEBI" id="CHEBI:29105"/>
    </ligand>
</feature>
<feature type="binding site" evidence="1">
    <location>
        <position position="425"/>
    </location>
    <ligand>
        <name>Zn(2+)</name>
        <dbReference type="ChEBI" id="CHEBI:29105"/>
    </ligand>
</feature>
<feature type="binding site" evidence="1">
    <location>
        <position position="428"/>
    </location>
    <ligand>
        <name>Zn(2+)</name>
        <dbReference type="ChEBI" id="CHEBI:29105"/>
    </ligand>
</feature>
<feature type="sequence conflict" description="In Ref. 2; CAA46371." evidence="3" ref="2">
    <original>QQ</original>
    <variation>HE</variation>
    <location>
        <begin position="23"/>
        <end position="24"/>
    </location>
</feature>
<dbReference type="EC" id="7.4.2.8" evidence="1"/>
<dbReference type="EMBL" id="CP002038">
    <property type="protein sequence ID" value="ADM99375.1"/>
    <property type="molecule type" value="Genomic_DNA"/>
</dbReference>
<dbReference type="EMBL" id="X65265">
    <property type="protein sequence ID" value="CAA46371.1"/>
    <property type="molecule type" value="Genomic_DNA"/>
</dbReference>
<dbReference type="PIR" id="S28015">
    <property type="entry name" value="S28015"/>
</dbReference>
<dbReference type="RefSeq" id="WP_013318809.1">
    <property type="nucleotide sequence ID" value="NC_014500.1"/>
</dbReference>
<dbReference type="SMR" id="Q01566"/>
<dbReference type="STRING" id="198628.Dda3937_02416"/>
<dbReference type="KEGG" id="ddd:Dda3937_02416"/>
<dbReference type="PATRIC" id="fig|198628.6.peg.3136"/>
<dbReference type="eggNOG" id="COG2804">
    <property type="taxonomic scope" value="Bacteria"/>
</dbReference>
<dbReference type="HOGENOM" id="CLU_013446_2_0_6"/>
<dbReference type="OrthoDB" id="9804785at2"/>
<dbReference type="Proteomes" id="UP000006859">
    <property type="component" value="Chromosome"/>
</dbReference>
<dbReference type="GO" id="GO:0005886">
    <property type="term" value="C:plasma membrane"/>
    <property type="evidence" value="ECO:0007669"/>
    <property type="project" value="UniProtKB-SubCell"/>
</dbReference>
<dbReference type="GO" id="GO:0015627">
    <property type="term" value="C:type II protein secretion system complex"/>
    <property type="evidence" value="ECO:0007669"/>
    <property type="project" value="InterPro"/>
</dbReference>
<dbReference type="GO" id="GO:0005524">
    <property type="term" value="F:ATP binding"/>
    <property type="evidence" value="ECO:0007669"/>
    <property type="project" value="UniProtKB-KW"/>
</dbReference>
<dbReference type="GO" id="GO:0016887">
    <property type="term" value="F:ATP hydrolysis activity"/>
    <property type="evidence" value="ECO:0007669"/>
    <property type="project" value="InterPro"/>
</dbReference>
<dbReference type="GO" id="GO:0046872">
    <property type="term" value="F:metal ion binding"/>
    <property type="evidence" value="ECO:0007669"/>
    <property type="project" value="UniProtKB-KW"/>
</dbReference>
<dbReference type="GO" id="GO:0008564">
    <property type="term" value="F:protein-exporting ATPase activity"/>
    <property type="evidence" value="ECO:0007669"/>
    <property type="project" value="UniProtKB-EC"/>
</dbReference>
<dbReference type="GO" id="GO:0016485">
    <property type="term" value="P:protein processing"/>
    <property type="evidence" value="ECO:0000315"/>
    <property type="project" value="ASAP"/>
</dbReference>
<dbReference type="GO" id="GO:0015628">
    <property type="term" value="P:protein secretion by the type II secretion system"/>
    <property type="evidence" value="ECO:0007669"/>
    <property type="project" value="InterPro"/>
</dbReference>
<dbReference type="CDD" id="cd01129">
    <property type="entry name" value="PulE-GspE-like"/>
    <property type="match status" value="1"/>
</dbReference>
<dbReference type="FunFam" id="3.30.450.90:FF:000001">
    <property type="entry name" value="Type II secretion system ATPase GspE"/>
    <property type="match status" value="1"/>
</dbReference>
<dbReference type="FunFam" id="3.40.50.300:FF:000398">
    <property type="entry name" value="Type IV pilus assembly ATPase PilB"/>
    <property type="match status" value="1"/>
</dbReference>
<dbReference type="Gene3D" id="3.30.450.90">
    <property type="match status" value="1"/>
</dbReference>
<dbReference type="Gene3D" id="3.40.50.300">
    <property type="entry name" value="P-loop containing nucleotide triphosphate hydrolases"/>
    <property type="match status" value="1"/>
</dbReference>
<dbReference type="Gene3D" id="3.30.300.160">
    <property type="entry name" value="Type II secretion system, protein E, N-terminal domain"/>
    <property type="match status" value="1"/>
</dbReference>
<dbReference type="InterPro" id="IPR003593">
    <property type="entry name" value="AAA+_ATPase"/>
</dbReference>
<dbReference type="InterPro" id="IPR054757">
    <property type="entry name" value="GSPE_N1E"/>
</dbReference>
<dbReference type="InterPro" id="IPR027417">
    <property type="entry name" value="P-loop_NTPase"/>
</dbReference>
<dbReference type="InterPro" id="IPR001482">
    <property type="entry name" value="T2SS/T4SS_dom"/>
</dbReference>
<dbReference type="InterPro" id="IPR037257">
    <property type="entry name" value="T2SS_E_N_sf"/>
</dbReference>
<dbReference type="InterPro" id="IPR013369">
    <property type="entry name" value="T2SS_GspE"/>
</dbReference>
<dbReference type="NCBIfam" id="TIGR02533">
    <property type="entry name" value="type_II_gspE"/>
    <property type="match status" value="1"/>
</dbReference>
<dbReference type="PANTHER" id="PTHR30258:SF27">
    <property type="entry name" value="BACTERIOPHAGE ADSORPTION PROTEIN B-RELATED"/>
    <property type="match status" value="1"/>
</dbReference>
<dbReference type="PANTHER" id="PTHR30258">
    <property type="entry name" value="TYPE II SECRETION SYSTEM PROTEIN GSPE-RELATED"/>
    <property type="match status" value="1"/>
</dbReference>
<dbReference type="Pfam" id="PF22341">
    <property type="entry name" value="GSPE_N1E"/>
    <property type="match status" value="1"/>
</dbReference>
<dbReference type="Pfam" id="PF00437">
    <property type="entry name" value="T2SSE"/>
    <property type="match status" value="1"/>
</dbReference>
<dbReference type="SMART" id="SM00382">
    <property type="entry name" value="AAA"/>
    <property type="match status" value="1"/>
</dbReference>
<dbReference type="SUPFAM" id="SSF160246">
    <property type="entry name" value="EspE N-terminal domain-like"/>
    <property type="match status" value="1"/>
</dbReference>
<dbReference type="SUPFAM" id="SSF52540">
    <property type="entry name" value="P-loop containing nucleoside triphosphate hydrolases"/>
    <property type="match status" value="1"/>
</dbReference>
<dbReference type="PROSITE" id="PS00662">
    <property type="entry name" value="T2SP_E"/>
    <property type="match status" value="1"/>
</dbReference>
<proteinExistence type="inferred from homology"/>
<organism>
    <name type="scientific">Dickeya dadantii (strain 3937)</name>
    <name type="common">Erwinia chrysanthemi (strain 3937)</name>
    <dbReference type="NCBI Taxonomy" id="198628"/>
    <lineage>
        <taxon>Bacteria</taxon>
        <taxon>Pseudomonadati</taxon>
        <taxon>Pseudomonadota</taxon>
        <taxon>Gammaproteobacteria</taxon>
        <taxon>Enterobacterales</taxon>
        <taxon>Pectobacteriaceae</taxon>
        <taxon>Dickeya</taxon>
    </lineage>
</organism>
<name>GSPE_DICD3</name>
<evidence type="ECO:0000250" key="1">
    <source>
        <dbReference type="UniProtKB" id="P37093"/>
    </source>
</evidence>
<evidence type="ECO:0000250" key="2">
    <source>
        <dbReference type="UniProtKB" id="Q00512"/>
    </source>
</evidence>
<evidence type="ECO:0000305" key="3"/>
<keyword id="KW-0067">ATP-binding</keyword>
<keyword id="KW-0997">Cell inner membrane</keyword>
<keyword id="KW-1003">Cell membrane</keyword>
<keyword id="KW-0472">Membrane</keyword>
<keyword id="KW-0479">Metal-binding</keyword>
<keyword id="KW-0547">Nucleotide-binding</keyword>
<keyword id="KW-0653">Protein transport</keyword>
<keyword id="KW-1185">Reference proteome</keyword>
<keyword id="KW-1278">Translocase</keyword>
<keyword id="KW-0813">Transport</keyword>
<keyword id="KW-0862">Zinc</keyword>